<keyword id="KW-0025">Alternative splicing</keyword>
<keyword id="KW-0966">Cell projection</keyword>
<keyword id="KW-0160">Chromosomal rearrangement</keyword>
<keyword id="KW-0969">Cilium</keyword>
<keyword id="KW-0175">Coiled coil</keyword>
<keyword id="KW-0282">Flagellum</keyword>
<keyword id="KW-0597">Phosphoprotein</keyword>
<keyword id="KW-1267">Proteomics identification</keyword>
<keyword id="KW-1185">Reference proteome</keyword>
<evidence type="ECO:0000255" key="1"/>
<evidence type="ECO:0000256" key="2">
    <source>
        <dbReference type="SAM" id="MobiDB-lite"/>
    </source>
</evidence>
<evidence type="ECO:0000269" key="3">
    <source>
    </source>
</evidence>
<evidence type="ECO:0000269" key="4">
    <source>
    </source>
</evidence>
<evidence type="ECO:0000269" key="5">
    <source ref="6"/>
</evidence>
<evidence type="ECO:0000303" key="6">
    <source>
    </source>
</evidence>
<evidence type="ECO:0000303" key="7">
    <source>
    </source>
</evidence>
<evidence type="ECO:0000303" key="8">
    <source>
    </source>
</evidence>
<evidence type="ECO:0000305" key="9"/>
<evidence type="ECO:0007744" key="10">
    <source>
    </source>
</evidence>
<sequence>MWAAGRWGPTFPSSYAGFSADCRPRSRPSSDSCSVPMTGARGQGLEVVRSPSPPLPLSCSNSTRSLLSPLGHQSFQFDEDDGDGEDEEDVDDEEDVDEDAHDSEAKVASLRGMELQGCASTQVESENNQEEQKQVRLPESRLTPWEVWFIGKEKEERDRLQLKALEELNQQLEKRKEMEEREKRKIIAEEKHKEWVQKKNEQKRKEREQKINKEMEEKAAKELEKEYLQEKAKEKYQEWLKKKNAEECERKKKEKEKEKQQQAEIQEKKEIAEKKFQEWLENAKHKPRPAAKSYGYANGKLTGFYSGNSYPEPAFYNPIPWKPIHMPPPKEAKDLSGRKSKRPVISQPHKSSSLVIHKARSNLCLGTLCRIQR</sequence>
<protein>
    <recommendedName>
        <fullName>Coiled-coil domain-containing protein 34</fullName>
    </recommendedName>
    <alternativeName>
        <fullName>Renal carcinoma antigen NY-REN-41</fullName>
    </alternativeName>
</protein>
<proteinExistence type="evidence at protein level"/>
<accession>Q96HJ3</accession>
<accession>B2R8G2</accession>
<accession>Q8IX69</accession>
<accession>Q9H2A6</accession>
<accession>Q9Y599</accession>
<reference key="1">
    <citation type="journal article" date="2004" name="Oncogene">
        <title>Suppression subtractive hybridization and expression profiling identifies a unique set of genes overexpressed in non-small-cell lung cancer.</title>
        <authorList>
            <person name="Petroziello J."/>
            <person name="Yamane A."/>
            <person name="Westendorf L."/>
            <person name="Thompson M."/>
            <person name="McDonagh C."/>
            <person name="Cerveny C."/>
            <person name="Law C.-L."/>
            <person name="Wahl A."/>
            <person name="Carter P."/>
        </authorList>
    </citation>
    <scope>NUCLEOTIDE SEQUENCE [MRNA] (ISOFORM 2)</scope>
</reference>
<reference key="2">
    <citation type="journal article" date="2004" name="Nat. Genet.">
        <title>Complete sequencing and characterization of 21,243 full-length human cDNAs.</title>
        <authorList>
            <person name="Ota T."/>
            <person name="Suzuki Y."/>
            <person name="Nishikawa T."/>
            <person name="Otsuki T."/>
            <person name="Sugiyama T."/>
            <person name="Irie R."/>
            <person name="Wakamatsu A."/>
            <person name="Hayashi K."/>
            <person name="Sato H."/>
            <person name="Nagai K."/>
            <person name="Kimura K."/>
            <person name="Makita H."/>
            <person name="Sekine M."/>
            <person name="Obayashi M."/>
            <person name="Nishi T."/>
            <person name="Shibahara T."/>
            <person name="Tanaka T."/>
            <person name="Ishii S."/>
            <person name="Yamamoto J."/>
            <person name="Saito K."/>
            <person name="Kawai Y."/>
            <person name="Isono Y."/>
            <person name="Nakamura Y."/>
            <person name="Nagahari K."/>
            <person name="Murakami K."/>
            <person name="Yasuda T."/>
            <person name="Iwayanagi T."/>
            <person name="Wagatsuma M."/>
            <person name="Shiratori A."/>
            <person name="Sudo H."/>
            <person name="Hosoiri T."/>
            <person name="Kaku Y."/>
            <person name="Kodaira H."/>
            <person name="Kondo H."/>
            <person name="Sugawara M."/>
            <person name="Takahashi M."/>
            <person name="Kanda K."/>
            <person name="Yokoi T."/>
            <person name="Furuya T."/>
            <person name="Kikkawa E."/>
            <person name="Omura Y."/>
            <person name="Abe K."/>
            <person name="Kamihara K."/>
            <person name="Katsuta N."/>
            <person name="Sato K."/>
            <person name="Tanikawa M."/>
            <person name="Yamazaki M."/>
            <person name="Ninomiya K."/>
            <person name="Ishibashi T."/>
            <person name="Yamashita H."/>
            <person name="Murakawa K."/>
            <person name="Fujimori K."/>
            <person name="Tanai H."/>
            <person name="Kimata M."/>
            <person name="Watanabe M."/>
            <person name="Hiraoka S."/>
            <person name="Chiba Y."/>
            <person name="Ishida S."/>
            <person name="Ono Y."/>
            <person name="Takiguchi S."/>
            <person name="Watanabe S."/>
            <person name="Yosida M."/>
            <person name="Hotuta T."/>
            <person name="Kusano J."/>
            <person name="Kanehori K."/>
            <person name="Takahashi-Fujii A."/>
            <person name="Hara H."/>
            <person name="Tanase T.-O."/>
            <person name="Nomura Y."/>
            <person name="Togiya S."/>
            <person name="Komai F."/>
            <person name="Hara R."/>
            <person name="Takeuchi K."/>
            <person name="Arita M."/>
            <person name="Imose N."/>
            <person name="Musashino K."/>
            <person name="Yuuki H."/>
            <person name="Oshima A."/>
            <person name="Sasaki N."/>
            <person name="Aotsuka S."/>
            <person name="Yoshikawa Y."/>
            <person name="Matsunawa H."/>
            <person name="Ichihara T."/>
            <person name="Shiohata N."/>
            <person name="Sano S."/>
            <person name="Moriya S."/>
            <person name="Momiyama H."/>
            <person name="Satoh N."/>
            <person name="Takami S."/>
            <person name="Terashima Y."/>
            <person name="Suzuki O."/>
            <person name="Nakagawa S."/>
            <person name="Senoh A."/>
            <person name="Mizoguchi H."/>
            <person name="Goto Y."/>
            <person name="Shimizu F."/>
            <person name="Wakebe H."/>
            <person name="Hishigaki H."/>
            <person name="Watanabe T."/>
            <person name="Sugiyama A."/>
            <person name="Takemoto M."/>
            <person name="Kawakami B."/>
            <person name="Yamazaki M."/>
            <person name="Watanabe K."/>
            <person name="Kumagai A."/>
            <person name="Itakura S."/>
            <person name="Fukuzumi Y."/>
            <person name="Fujimori Y."/>
            <person name="Komiyama M."/>
            <person name="Tashiro H."/>
            <person name="Tanigami A."/>
            <person name="Fujiwara T."/>
            <person name="Ono T."/>
            <person name="Yamada K."/>
            <person name="Fujii Y."/>
            <person name="Ozaki K."/>
            <person name="Hirao M."/>
            <person name="Ohmori Y."/>
            <person name="Kawabata A."/>
            <person name="Hikiji T."/>
            <person name="Kobatake N."/>
            <person name="Inagaki H."/>
            <person name="Ikema Y."/>
            <person name="Okamoto S."/>
            <person name="Okitani R."/>
            <person name="Kawakami T."/>
            <person name="Noguchi S."/>
            <person name="Itoh T."/>
            <person name="Shigeta K."/>
            <person name="Senba T."/>
            <person name="Matsumura K."/>
            <person name="Nakajima Y."/>
            <person name="Mizuno T."/>
            <person name="Morinaga M."/>
            <person name="Sasaki M."/>
            <person name="Togashi T."/>
            <person name="Oyama M."/>
            <person name="Hata H."/>
            <person name="Watanabe M."/>
            <person name="Komatsu T."/>
            <person name="Mizushima-Sugano J."/>
            <person name="Satoh T."/>
            <person name="Shirai Y."/>
            <person name="Takahashi Y."/>
            <person name="Nakagawa K."/>
            <person name="Okumura K."/>
            <person name="Nagase T."/>
            <person name="Nomura N."/>
            <person name="Kikuchi H."/>
            <person name="Masuho Y."/>
            <person name="Yamashita R."/>
            <person name="Nakai K."/>
            <person name="Yada T."/>
            <person name="Nakamura Y."/>
            <person name="Ohara O."/>
            <person name="Isogai T."/>
            <person name="Sugano S."/>
        </authorList>
    </citation>
    <scope>NUCLEOTIDE SEQUENCE [LARGE SCALE MRNA] (ISOFORM 2)</scope>
    <source>
        <tissue>Testis</tissue>
    </source>
</reference>
<reference key="3">
    <citation type="journal article" date="2006" name="Nature">
        <title>Human chromosome 11 DNA sequence and analysis including novel gene identification.</title>
        <authorList>
            <person name="Taylor T.D."/>
            <person name="Noguchi H."/>
            <person name="Totoki Y."/>
            <person name="Toyoda A."/>
            <person name="Kuroki Y."/>
            <person name="Dewar K."/>
            <person name="Lloyd C."/>
            <person name="Itoh T."/>
            <person name="Takeda T."/>
            <person name="Kim D.-W."/>
            <person name="She X."/>
            <person name="Barlow K.F."/>
            <person name="Bloom T."/>
            <person name="Bruford E."/>
            <person name="Chang J.L."/>
            <person name="Cuomo C.A."/>
            <person name="Eichler E."/>
            <person name="FitzGerald M.G."/>
            <person name="Jaffe D.B."/>
            <person name="LaButti K."/>
            <person name="Nicol R."/>
            <person name="Park H.-S."/>
            <person name="Seaman C."/>
            <person name="Sougnez C."/>
            <person name="Yang X."/>
            <person name="Zimmer A.R."/>
            <person name="Zody M.C."/>
            <person name="Birren B.W."/>
            <person name="Nusbaum C."/>
            <person name="Fujiyama A."/>
            <person name="Hattori M."/>
            <person name="Rogers J."/>
            <person name="Lander E.S."/>
            <person name="Sakaki Y."/>
        </authorList>
    </citation>
    <scope>NUCLEOTIDE SEQUENCE [LARGE SCALE GENOMIC DNA]</scope>
</reference>
<reference key="4">
    <citation type="journal article" date="2004" name="Genome Res.">
        <title>The status, quality, and expansion of the NIH full-length cDNA project: the Mammalian Gene Collection (MGC).</title>
        <authorList>
            <consortium name="The MGC Project Team"/>
        </authorList>
    </citation>
    <scope>NUCLEOTIDE SEQUENCE [LARGE SCALE MRNA] (ISOFORM 2)</scope>
    <source>
        <tissue>Brain</tissue>
    </source>
</reference>
<reference key="5">
    <citation type="journal article" date="1999" name="Int. J. Cancer">
        <title>Antigens recognized by autologous antibody in patients with renal-cell carcinoma.</title>
        <authorList>
            <person name="Scanlan M.J."/>
            <person name="Gordan J.D."/>
            <person name="Williamson B."/>
            <person name="Stockert E."/>
            <person name="Bander N.H."/>
            <person name="Jongeneel C.V."/>
            <person name="Gure A.O."/>
            <person name="Jaeger D."/>
            <person name="Jaeger E."/>
            <person name="Knuth A."/>
            <person name="Chen Y.-T."/>
            <person name="Old L.J."/>
        </authorList>
    </citation>
    <scope>NUCLEOTIDE SEQUENCE [MRNA] OF 1-202 (ISOFORM 1)</scope>
    <scope>IDENTIFICATION AS A RENAL CANCER ANTIGEN</scope>
</reference>
<reference key="6">
    <citation type="submission" date="2001-05" db="EMBL/GenBank/DDBJ databases">
        <authorList>
            <person name="Panvichian R."/>
            <person name="Ratanavila A."/>
            <person name="Ratanatharathorn V."/>
        </authorList>
    </citation>
    <scope>NUCLEOTIDE SEQUENCE [MRNA] OF 20-373 (ISOFORM 1)</scope>
    <scope>VARIANT ALA-264</scope>
</reference>
<reference key="7">
    <citation type="journal article" date="2000" name="Cytogenet. Cell Genet.">
        <title>Cloning and characterization of the breakpoint regions of a chromosome 11;18 translocation in a patient with hamartoma of the retinal pigment epithelium.</title>
        <authorList>
            <person name="Kutsche K."/>
            <person name="Glauner E."/>
            <person name="Knauf S."/>
            <person name="Pomarino A."/>
            <person name="Schmidt M."/>
            <person name="Schroeder B."/>
            <person name="Nothwang H."/>
            <person name="Schueler H."/>
            <person name="Goecke T."/>
            <person name="Kersten A."/>
            <person name="Althaus C."/>
            <person name="Gal A."/>
        </authorList>
    </citation>
    <scope>NUCLEOTIDE SEQUENCE [MRNA] OF 236-373 (ISOFORM 1)</scope>
    <scope>CHROMOSOMAL TRANSLOCATION</scope>
</reference>
<reference key="8">
    <citation type="journal article" date="2013" name="J. Proteome Res.">
        <title>Toward a comprehensive characterization of a human cancer cell phosphoproteome.</title>
        <authorList>
            <person name="Zhou H."/>
            <person name="Di Palma S."/>
            <person name="Preisinger C."/>
            <person name="Peng M."/>
            <person name="Polat A.N."/>
            <person name="Heck A.J."/>
            <person name="Mohammed S."/>
        </authorList>
    </citation>
    <scope>PHOSPHORYLATION [LARGE SCALE ANALYSIS] AT SER-52</scope>
    <scope>IDENTIFICATION BY MASS SPECTROMETRY [LARGE SCALE ANALYSIS]</scope>
    <source>
        <tissue>Cervix carcinoma</tissue>
    </source>
</reference>
<reference key="9">
    <citation type="journal article" date="2022" name="J. Med. Genet.">
        <title>Homozygous mutations in CCDC34 cause male infertility with oligoasthenoteratozoospermia in humans and mice.</title>
        <authorList>
            <person name="Cong J."/>
            <person name="Wang X."/>
            <person name="Amiri-Yekta A."/>
            <person name="Wang L."/>
            <person name="Kherraf Z.E."/>
            <person name="Liu C."/>
            <person name="Cazin C."/>
            <person name="Tang S."/>
            <person name="Hosseini S.H."/>
            <person name="Tian S."/>
            <person name="Daneshipour A."/>
            <person name="Wang J."/>
            <person name="Zhou Y."/>
            <person name="Zeng Y."/>
            <person name="Yang S."/>
            <person name="He X."/>
            <person name="Li J."/>
            <person name="Cao Y."/>
            <person name="Jin L."/>
            <person name="Ray P.F."/>
            <person name="Zhang F."/>
        </authorList>
    </citation>
    <scope>FUNCTION</scope>
    <scope>INVOLVEMENT IN SPGF76</scope>
    <scope>SUBCELLULAR LOCATION</scope>
    <scope>TISSUE SPECIFICITY</scope>
</reference>
<name>CCD34_HUMAN</name>
<dbReference type="EMBL" id="AY598334">
    <property type="protein sequence ID" value="AAT06745.1"/>
    <property type="molecule type" value="mRNA"/>
</dbReference>
<dbReference type="EMBL" id="AK313358">
    <property type="protein sequence ID" value="BAG36159.1"/>
    <property type="molecule type" value="mRNA"/>
</dbReference>
<dbReference type="EMBL" id="AC090597">
    <property type="status" value="NOT_ANNOTATED_CDS"/>
    <property type="molecule type" value="Genomic_DNA"/>
</dbReference>
<dbReference type="EMBL" id="BC008496">
    <property type="protein sequence ID" value="AAH08496.1"/>
    <property type="molecule type" value="mRNA"/>
</dbReference>
<dbReference type="EMBL" id="AF155108">
    <property type="protein sequence ID" value="AAD42874.1"/>
    <property type="status" value="ALT_FRAME"/>
    <property type="molecule type" value="mRNA"/>
</dbReference>
<dbReference type="EMBL" id="AF382034">
    <property type="protein sequence ID" value="AAO13807.1"/>
    <property type="status" value="ALT_SEQ"/>
    <property type="molecule type" value="mRNA"/>
</dbReference>
<dbReference type="EMBL" id="AF301222">
    <property type="protein sequence ID" value="AAG39935.1"/>
    <property type="molecule type" value="mRNA"/>
</dbReference>
<dbReference type="CCDS" id="CCDS31448.1">
    <molecule id="Q96HJ3-1"/>
</dbReference>
<dbReference type="CCDS" id="CCDS7863.1">
    <molecule id="Q96HJ3-2"/>
</dbReference>
<dbReference type="RefSeq" id="NP_110398.1">
    <molecule id="Q96HJ3-1"/>
    <property type="nucleotide sequence ID" value="NM_030771.2"/>
</dbReference>
<dbReference type="RefSeq" id="NP_542385.1">
    <molecule id="Q96HJ3-2"/>
    <property type="nucleotide sequence ID" value="NM_080654.3"/>
</dbReference>
<dbReference type="SMR" id="Q96HJ3"/>
<dbReference type="BioGRID" id="124792">
    <property type="interactions" value="12"/>
</dbReference>
<dbReference type="FunCoup" id="Q96HJ3">
    <property type="interactions" value="138"/>
</dbReference>
<dbReference type="IntAct" id="Q96HJ3">
    <property type="interactions" value="10"/>
</dbReference>
<dbReference type="STRING" id="9606.ENSP00000330240"/>
<dbReference type="iPTMnet" id="Q96HJ3"/>
<dbReference type="PhosphoSitePlus" id="Q96HJ3"/>
<dbReference type="BioMuta" id="CCDC34"/>
<dbReference type="DMDM" id="190358750"/>
<dbReference type="jPOST" id="Q96HJ3"/>
<dbReference type="MassIVE" id="Q96HJ3"/>
<dbReference type="PaxDb" id="9606-ENSP00000330240"/>
<dbReference type="PeptideAtlas" id="Q96HJ3"/>
<dbReference type="ProteomicsDB" id="76754">
    <molecule id="Q96HJ3-1"/>
</dbReference>
<dbReference type="ProteomicsDB" id="76755">
    <molecule id="Q96HJ3-2"/>
</dbReference>
<dbReference type="Antibodypedia" id="48802">
    <property type="antibodies" value="66 antibodies from 13 providers"/>
</dbReference>
<dbReference type="DNASU" id="91057"/>
<dbReference type="Ensembl" id="ENST00000317945.6">
    <molecule id="Q96HJ3-2"/>
    <property type="protein sequence ID" value="ENSP00000321563.6"/>
    <property type="gene ID" value="ENSG00000109881.17"/>
</dbReference>
<dbReference type="Ensembl" id="ENST00000328697.11">
    <molecule id="Q96HJ3-1"/>
    <property type="protein sequence ID" value="ENSP00000330240.5"/>
    <property type="gene ID" value="ENSG00000109881.17"/>
</dbReference>
<dbReference type="GeneID" id="91057"/>
<dbReference type="KEGG" id="hsa:91057"/>
<dbReference type="MANE-Select" id="ENST00000328697.11">
    <property type="protein sequence ID" value="ENSP00000330240.5"/>
    <property type="RefSeq nucleotide sequence ID" value="NM_030771.2"/>
    <property type="RefSeq protein sequence ID" value="NP_110398.1"/>
</dbReference>
<dbReference type="UCSC" id="uc001mrh.2">
    <molecule id="Q96HJ3-1"/>
    <property type="organism name" value="human"/>
</dbReference>
<dbReference type="AGR" id="HGNC:25079"/>
<dbReference type="CTD" id="91057"/>
<dbReference type="DisGeNET" id="91057"/>
<dbReference type="GeneCards" id="CCDC34"/>
<dbReference type="HGNC" id="HGNC:25079">
    <property type="gene designation" value="CCDC34"/>
</dbReference>
<dbReference type="HPA" id="ENSG00000109881">
    <property type="expression patterns" value="Tissue enhanced (testis)"/>
</dbReference>
<dbReference type="MalaCards" id="CCDC34"/>
<dbReference type="MIM" id="612324">
    <property type="type" value="gene"/>
</dbReference>
<dbReference type="MIM" id="620084">
    <property type="type" value="phenotype"/>
</dbReference>
<dbReference type="neXtProt" id="NX_Q96HJ3"/>
<dbReference type="OpenTargets" id="ENSG00000109881"/>
<dbReference type="Orphanet" id="399805">
    <property type="disease" value="Male infertility with azoospermia or oligozoospermia due to single gene mutation"/>
</dbReference>
<dbReference type="PharmGKB" id="PA142672189"/>
<dbReference type="VEuPathDB" id="HostDB:ENSG00000109881"/>
<dbReference type="eggNOG" id="ENOG502RRPQ">
    <property type="taxonomic scope" value="Eukaryota"/>
</dbReference>
<dbReference type="GeneTree" id="ENSGT00730000111271"/>
<dbReference type="HOGENOM" id="CLU_063061_0_0_1"/>
<dbReference type="InParanoid" id="Q96HJ3"/>
<dbReference type="OMA" id="FTGDCRP"/>
<dbReference type="OrthoDB" id="5981665at2759"/>
<dbReference type="PAN-GO" id="Q96HJ3">
    <property type="GO annotations" value="0 GO annotations based on evolutionary models"/>
</dbReference>
<dbReference type="PhylomeDB" id="Q96HJ3"/>
<dbReference type="TreeFam" id="TF333383"/>
<dbReference type="PathwayCommons" id="Q96HJ3"/>
<dbReference type="SignaLink" id="Q96HJ3"/>
<dbReference type="BioGRID-ORCS" id="91057">
    <property type="hits" value="10 hits in 1154 CRISPR screens"/>
</dbReference>
<dbReference type="CD-CODE" id="8C2F96ED">
    <property type="entry name" value="Centrosome"/>
</dbReference>
<dbReference type="ChiTaRS" id="CCDC34">
    <property type="organism name" value="human"/>
</dbReference>
<dbReference type="GenomeRNAi" id="91057"/>
<dbReference type="Pharos" id="Q96HJ3">
    <property type="development level" value="Tbio"/>
</dbReference>
<dbReference type="PRO" id="PR:Q96HJ3"/>
<dbReference type="Proteomes" id="UP000005640">
    <property type="component" value="Chromosome 11"/>
</dbReference>
<dbReference type="RNAct" id="Q96HJ3">
    <property type="molecule type" value="protein"/>
</dbReference>
<dbReference type="Bgee" id="ENSG00000109881">
    <property type="expression patterns" value="Expressed in left testis and 173 other cell types or tissues"/>
</dbReference>
<dbReference type="GO" id="GO:0097225">
    <property type="term" value="C:sperm midpiece"/>
    <property type="evidence" value="ECO:0000314"/>
    <property type="project" value="UniProtKB"/>
</dbReference>
<dbReference type="GO" id="GO:0007283">
    <property type="term" value="P:spermatogenesis"/>
    <property type="evidence" value="ECO:0000315"/>
    <property type="project" value="UniProtKB"/>
</dbReference>
<dbReference type="InterPro" id="IPR045323">
    <property type="entry name" value="CCDC34"/>
</dbReference>
<dbReference type="InterPro" id="IPR025259">
    <property type="entry name" value="CCDC34/181"/>
</dbReference>
<dbReference type="PANTHER" id="PTHR23247:SF2">
    <property type="entry name" value="COILED-COIL DOMAIN-CONTAINING PROTEIN 34"/>
    <property type="match status" value="1"/>
</dbReference>
<dbReference type="PANTHER" id="PTHR23247">
    <property type="entry name" value="NY-REN-41 ANTIGEN L15 -RELATED"/>
    <property type="match status" value="1"/>
</dbReference>
<dbReference type="Pfam" id="PF13904">
    <property type="entry name" value="CCDC34"/>
    <property type="match status" value="1"/>
</dbReference>
<gene>
    <name type="primary">CCDC34</name>
    <name type="synonym">RAMA3</name>
    <name type="ORF">L15</name>
</gene>
<comment type="function">
    <text evidence="4">Involved in spermatogenesis. Has a probable role in anterograde intraflagellar transport which is essential for the formation of sperm flagella.</text>
</comment>
<comment type="interaction">
    <interactant intactId="EBI-17641690">
        <id>Q96HJ3-2</id>
    </interactant>
    <interactant intactId="EBI-745535">
        <id>Q8NI60</id>
        <label>COQ8A</label>
    </interactant>
    <organismsDiffer>false</organismsDiffer>
    <experiments>3</experiments>
</comment>
<comment type="interaction">
    <interactant intactId="EBI-17641690">
        <id>Q96HJ3-2</id>
    </interactant>
    <interactant intactId="EBI-399080">
        <id>Q92993</id>
        <label>KAT5</label>
    </interactant>
    <organismsDiffer>false</organismsDiffer>
    <experiments>3</experiments>
</comment>
<comment type="interaction">
    <interactant intactId="EBI-17641690">
        <id>Q96HJ3-2</id>
    </interactant>
    <interactant intactId="EBI-11742507">
        <id>Q8TAP4-4</id>
        <label>LMO3</label>
    </interactant>
    <organismsDiffer>false</organismsDiffer>
    <experiments>3</experiments>
</comment>
<comment type="interaction">
    <interactant intactId="EBI-17641690">
        <id>Q96HJ3-2</id>
    </interactant>
    <interactant intactId="EBI-9090795">
        <id>Q15047-2</id>
        <label>SETDB1</label>
    </interactant>
    <organismsDiffer>false</organismsDiffer>
    <experiments>3</experiments>
</comment>
<comment type="interaction">
    <interactant intactId="EBI-17641690">
        <id>Q96HJ3-2</id>
    </interactant>
    <interactant intactId="EBI-2548832">
        <id>Q8N661</id>
        <label>TMEM86B</label>
    </interactant>
    <organismsDiffer>false</organismsDiffer>
    <experiments>3</experiments>
</comment>
<comment type="interaction">
    <interactant intactId="EBI-17641690">
        <id>Q96HJ3-2</id>
    </interactant>
    <interactant intactId="EBI-359832">
        <id>P61981</id>
        <label>YWHAG</label>
    </interactant>
    <organismsDiffer>false</organismsDiffer>
    <experiments>3</experiments>
</comment>
<comment type="subcellular location">
    <subcellularLocation>
        <location evidence="4">Cell projection</location>
        <location evidence="4">Cilium</location>
        <location evidence="4">Flagellum</location>
    </subcellularLocation>
    <text evidence="4">Mainly located in the mid-piece of sperm flagella.</text>
</comment>
<comment type="alternative products">
    <event type="alternative splicing"/>
    <isoform>
        <id>Q96HJ3-1</id>
        <name>1</name>
        <sequence type="displayed"/>
    </isoform>
    <isoform>
        <id>Q96HJ3-2</id>
        <name>2</name>
        <sequence type="described" ref="VSP_034096 VSP_034097"/>
    </isoform>
</comment>
<comment type="tissue specificity">
    <text evidence="4">Expressed in sperm.</text>
</comment>
<comment type="disease" evidence="4">
    <disease id="DI-06529">
        <name>Spermatogenic failure 76</name>
        <acronym>SPGF76</acronym>
        <description>An autosomal recessive male infertility disorder characterized by oligoasthenoteratozoospermia, and abnormally shaped spermatozoa in the semen of affected individuals. Sperm flagella have multiple morphological abnormalities, including short, absent, and irregular caliber flagella.</description>
        <dbReference type="MIM" id="620084"/>
    </disease>
    <text>The disease may be caused by variants affecting the gene represented in this entry.</text>
</comment>
<comment type="disease">
    <text evidence="3">A chromosomal aberration involving CCDC34 is found in a patient with hamartoma of the retinal pigment epithelium and retina. Translocation t(11;18) (p13;p11.2).</text>
</comment>
<comment type="miscellaneous">
    <text>Antigen recognized by autologous antibody in patients with renal-cell carcinoma.</text>
</comment>
<comment type="sequence caution" evidence="9">
    <conflict type="frameshift">
        <sequence resource="EMBL-CDS" id="AAD42874"/>
    </conflict>
</comment>
<comment type="sequence caution" evidence="9">
    <conflict type="erroneous initiation">
        <sequence resource="EMBL-CDS" id="AAO13807"/>
    </conflict>
    <text>Truncated N-terminus.</text>
</comment>
<comment type="sequence caution" evidence="9">
    <conflict type="frameshift">
        <sequence resource="EMBL-CDS" id="AAO13807"/>
    </conflict>
</comment>
<organism>
    <name type="scientific">Homo sapiens</name>
    <name type="common">Human</name>
    <dbReference type="NCBI Taxonomy" id="9606"/>
    <lineage>
        <taxon>Eukaryota</taxon>
        <taxon>Metazoa</taxon>
        <taxon>Chordata</taxon>
        <taxon>Craniata</taxon>
        <taxon>Vertebrata</taxon>
        <taxon>Euteleostomi</taxon>
        <taxon>Mammalia</taxon>
        <taxon>Eutheria</taxon>
        <taxon>Euarchontoglires</taxon>
        <taxon>Primates</taxon>
        <taxon>Haplorrhini</taxon>
        <taxon>Catarrhini</taxon>
        <taxon>Hominidae</taxon>
        <taxon>Homo</taxon>
    </lineage>
</organism>
<feature type="chain" id="PRO_0000339111" description="Coiled-coil domain-containing protein 34">
    <location>
        <begin position="1"/>
        <end position="373"/>
    </location>
</feature>
<feature type="region of interest" description="Disordered" evidence="2">
    <location>
        <begin position="1"/>
        <end position="112"/>
    </location>
</feature>
<feature type="region of interest" description="Disordered" evidence="2">
    <location>
        <begin position="118"/>
        <end position="137"/>
    </location>
</feature>
<feature type="region of interest" description="Disordered" evidence="2">
    <location>
        <begin position="324"/>
        <end position="352"/>
    </location>
</feature>
<feature type="coiled-coil region" evidence="1">
    <location>
        <begin position="152"/>
        <end position="286"/>
    </location>
</feature>
<feature type="compositionally biased region" description="Polar residues" evidence="2">
    <location>
        <begin position="61"/>
        <end position="76"/>
    </location>
</feature>
<feature type="compositionally biased region" description="Acidic residues" evidence="2">
    <location>
        <begin position="77"/>
        <end position="101"/>
    </location>
</feature>
<feature type="compositionally biased region" description="Basic and acidic residues" evidence="2">
    <location>
        <begin position="328"/>
        <end position="337"/>
    </location>
</feature>
<feature type="modified residue" description="Phosphoserine" evidence="10">
    <location>
        <position position="52"/>
    </location>
</feature>
<feature type="splice variant" id="VSP_034096" description="In isoform 2." evidence="6 7 8">
    <original>KRKEREQKINKEMEEKAAKELEKEYLQ</original>
    <variation>VRRGKWIHTLTSLLQNISSYYTSLPRF</variation>
    <location>
        <begin position="203"/>
        <end position="229"/>
    </location>
</feature>
<feature type="splice variant" id="VSP_034097" description="In isoform 2." evidence="6 7 8">
    <location>
        <begin position="230"/>
        <end position="373"/>
    </location>
</feature>
<feature type="sequence variant" id="VAR_043866" description="In dbSNP:rs11549824.">
    <original>P</original>
    <variation>S</variation>
    <location>
        <position position="53"/>
    </location>
</feature>
<feature type="sequence variant" id="VAR_050750" description="In dbSNP:rs12364852.">
    <original>H</original>
    <variation>N</variation>
    <location>
        <position position="192"/>
    </location>
</feature>
<feature type="sequence variant" id="VAR_043867" description="In dbSNP:rs17244028." evidence="5">
    <original>E</original>
    <variation>A</variation>
    <location>
        <position position="264"/>
    </location>
</feature>
<feature type="sequence variant" id="VAR_043868" description="In dbSNP:rs16925453.">
    <original>I</original>
    <variation>V</variation>
    <location>
        <position position="319"/>
    </location>
</feature>
<feature type="sequence conflict" description="In Ref. 5; AAD42874." evidence="9" ref="5">
    <original>A</original>
    <variation>P</variation>
    <location>
        <position position="3"/>
    </location>
</feature>